<evidence type="ECO:0000305" key="1"/>
<proteinExistence type="inferred from homology"/>
<gene>
    <name type="primary">Segment-4</name>
</gene>
<comment type="function">
    <text>The VP4 protein is one of the five proteins (with VP1, VP3, VP6 and VP7) which form the inner capsid of the virus.</text>
</comment>
<comment type="subcellular location">
    <subcellularLocation>
        <location evidence="1">Virion</location>
    </subcellularLocation>
</comment>
<comment type="similarity">
    <text evidence="1">Belongs to the orbivirus VP4 family.</text>
</comment>
<protein>
    <recommendedName>
        <fullName>Core protein VP4</fullName>
    </recommendedName>
    <alternativeName>
        <fullName>Inner capsid protein VP4</fullName>
    </alternativeName>
</protein>
<accession>Q64929</accession>
<keyword id="KW-0167">Capsid protein</keyword>
<keyword id="KW-1152">Outer capsid protein</keyword>
<keyword id="KW-0946">Virion</keyword>
<feature type="chain" id="PRO_0000222708" description="Core protein VP4">
    <location>
        <begin position="1"/>
        <end position="642"/>
    </location>
</feature>
<organism>
    <name type="scientific">African horse sickness virus</name>
    <name type="common">AHSV</name>
    <name type="synonym">Orbivirus alphaequi</name>
    <dbReference type="NCBI Taxonomy" id="40050"/>
    <lineage>
        <taxon>Viruses</taxon>
        <taxon>Riboviria</taxon>
        <taxon>Orthornavirae</taxon>
        <taxon>Duplornaviricota</taxon>
        <taxon>Resentoviricetes</taxon>
        <taxon>Reovirales</taxon>
        <taxon>Sedoreoviridae</taxon>
        <taxon>Orbivirus</taxon>
    </lineage>
</organism>
<dbReference type="EMBL" id="D14402">
    <property type="protein sequence ID" value="BAA03305.1"/>
    <property type="molecule type" value="Genomic_RNA"/>
</dbReference>
<dbReference type="SMR" id="Q64929"/>
<dbReference type="KEGG" id="vg:2930874"/>
<dbReference type="Proteomes" id="UP000201896">
    <property type="component" value="Genome"/>
</dbReference>
<dbReference type="GO" id="GO:0039624">
    <property type="term" value="C:viral outer capsid"/>
    <property type="evidence" value="ECO:0007669"/>
    <property type="project" value="UniProtKB-KW"/>
</dbReference>
<dbReference type="CDD" id="cd20758">
    <property type="entry name" value="capping_2-OMTase_Orbivirus"/>
    <property type="match status" value="1"/>
</dbReference>
<dbReference type="Gene3D" id="1.20.1280.200">
    <property type="entry name" value="Orbivirus VP4 core protein, C-terminal domain"/>
    <property type="match status" value="1"/>
</dbReference>
<dbReference type="Gene3D" id="3.40.50.150">
    <property type="entry name" value="Vaccinia Virus protein VP39"/>
    <property type="match status" value="1"/>
</dbReference>
<dbReference type="InterPro" id="IPR007753">
    <property type="entry name" value="Orbi_VP4"/>
</dbReference>
<dbReference type="InterPro" id="IPR043026">
    <property type="entry name" value="Orbi_VP4_C"/>
</dbReference>
<dbReference type="InterPro" id="IPR029063">
    <property type="entry name" value="SAM-dependent_MTases_sf"/>
</dbReference>
<dbReference type="Pfam" id="PF05059">
    <property type="entry name" value="Orbi_VP4"/>
    <property type="match status" value="1"/>
</dbReference>
<name>VP4_AHSV</name>
<reference key="1">
    <citation type="journal article" date="1993" name="Virus Res.">
        <title>The complete nucleotide sequence of African horsesickness virus serotype 4 (vaccine strain) segment 4, which encodes the minor core protein VP4.</title>
        <authorList>
            <person name="Mizukoshi N."/>
            <person name="Sakamoto K."/>
            <person name="Iwata A."/>
            <person name="Tsuchiya T."/>
            <person name="Ueda S."/>
            <person name="Apiwatnakorn B."/>
            <person name="Kamada M."/>
            <person name="Fukusho A."/>
        </authorList>
    </citation>
    <scope>NUCLEOTIDE SEQUENCE [GENOMIC RNA]</scope>
    <source>
        <strain>Serotype 4</strain>
    </source>
</reference>
<sequence length="642" mass="75827">MEPYAILYVTQEIEYLLKDSFLPKWELDGIKDLNTLWLERGRMACDTYAIGKIEQWSVRQLRAHRFLFISTKRKIRLKDCTISPDIFILKKELKEYDMKRFETLIGRRRVTLRKSFGNMLRAYAFQHVTVLHGSEAETLSYADPKRHVVKGQPKAAPMYDHPDRWWRDVDDGPTDKKLVSMLDYIIYSADEVYYVGCGDLKTLEQFASRDRKRFDRIKWICIDPIAPETSYANVKVVREKVVSARDLKHYLMRDEVERLLIWDVSADGLKGTIEWEKQRFKEDRNGENIAEALCADFALALIKHRIPEESDEYICRSSWLIPQPGAPITMYELRNLMRLDGYSHVERKHIPRAYARKIDAEVARRLVEEYHGEDVGRLLKRSLYEDIHIERADGLTDGDERTRADLFYLTNMRNVAFMHDVYRVVEKSFISTLWVSNRQNFTYDDVPVNRNFITLRFSKKNRRVLDGNGAILFLMWQHPKDFPKTMNYDPSWAENYAVIFYHALTSPVPDLSLCRFIGLRLMSSTLRINSDRAHQVTDILKKLGLDVSGHLFICLMSNSYVADLDWWFRMILEWSVKDREGKLAALSEAKAELIEWRDEKADEPWHIKNDLLAALFEFIYFAKHFDINERYVESWIQYLRNA</sequence>